<proteinExistence type="inferred from homology"/>
<organism>
    <name type="scientific">Listeria monocytogenes serotype 4a (strain HCC23)</name>
    <dbReference type="NCBI Taxonomy" id="552536"/>
    <lineage>
        <taxon>Bacteria</taxon>
        <taxon>Bacillati</taxon>
        <taxon>Bacillota</taxon>
        <taxon>Bacilli</taxon>
        <taxon>Bacillales</taxon>
        <taxon>Listeriaceae</taxon>
        <taxon>Listeria</taxon>
    </lineage>
</organism>
<protein>
    <recommendedName>
        <fullName evidence="1">UPF0756 membrane protein LMHCC_1001</fullName>
    </recommendedName>
</protein>
<feature type="chain" id="PRO_0000388902" description="UPF0756 membrane protein LMHCC_1001">
    <location>
        <begin position="1"/>
        <end position="153"/>
    </location>
</feature>
<feature type="transmembrane region" description="Helical" evidence="1">
    <location>
        <begin position="6"/>
        <end position="26"/>
    </location>
</feature>
<feature type="transmembrane region" description="Helical" evidence="1">
    <location>
        <begin position="54"/>
        <end position="74"/>
    </location>
</feature>
<feature type="transmembrane region" description="Helical" evidence="1">
    <location>
        <begin position="80"/>
        <end position="100"/>
    </location>
</feature>
<feature type="transmembrane region" description="Helical" evidence="1">
    <location>
        <begin position="117"/>
        <end position="137"/>
    </location>
</feature>
<accession>B8DHI0</accession>
<sequence>MFTESMLFLLLFLLLGLIAKNNSLIIAVAVVILLKLFHVDGKAMEMIQAKGINWGVTIITVAILIPIATGQIGFKDLIDSFKSAAGWIGLGAGIAVSILAKKGVGYMAVDPQVTVSLVFGTILAVVLFRGIAAGPVIAAGIAYMAMQLVAFIK</sequence>
<name>Y1001_LISMH</name>
<dbReference type="EMBL" id="CP001175">
    <property type="protein sequence ID" value="ACK39349.1"/>
    <property type="molecule type" value="Genomic_DNA"/>
</dbReference>
<dbReference type="RefSeq" id="WP_003725694.1">
    <property type="nucleotide sequence ID" value="NC_011660.1"/>
</dbReference>
<dbReference type="KEGG" id="lmh:LMHCC_1001"/>
<dbReference type="HOGENOM" id="CLU_125889_1_0_9"/>
<dbReference type="GO" id="GO:0005886">
    <property type="term" value="C:plasma membrane"/>
    <property type="evidence" value="ECO:0007669"/>
    <property type="project" value="UniProtKB-SubCell"/>
</dbReference>
<dbReference type="HAMAP" id="MF_01874">
    <property type="entry name" value="UPF0756"/>
    <property type="match status" value="1"/>
</dbReference>
<dbReference type="InterPro" id="IPR007382">
    <property type="entry name" value="UPF0756_TM"/>
</dbReference>
<dbReference type="PANTHER" id="PTHR38452">
    <property type="entry name" value="UPF0756 MEMBRANE PROTEIN YEAL"/>
    <property type="match status" value="1"/>
</dbReference>
<dbReference type="PANTHER" id="PTHR38452:SF1">
    <property type="entry name" value="UPF0756 MEMBRANE PROTEIN YEAL"/>
    <property type="match status" value="1"/>
</dbReference>
<dbReference type="Pfam" id="PF04284">
    <property type="entry name" value="DUF441"/>
    <property type="match status" value="1"/>
</dbReference>
<reference key="1">
    <citation type="journal article" date="2011" name="J. Bacteriol.">
        <title>Genome sequence of lineage III Listeria monocytogenes strain HCC23.</title>
        <authorList>
            <person name="Steele C.L."/>
            <person name="Donaldson J.R."/>
            <person name="Paul D."/>
            <person name="Banes M.M."/>
            <person name="Arick T."/>
            <person name="Bridges S.M."/>
            <person name="Lawrence M.L."/>
        </authorList>
    </citation>
    <scope>NUCLEOTIDE SEQUENCE [LARGE SCALE GENOMIC DNA]</scope>
    <source>
        <strain>HCC23</strain>
    </source>
</reference>
<comment type="subcellular location">
    <subcellularLocation>
        <location evidence="1">Cell membrane</location>
        <topology evidence="1">Multi-pass membrane protein</topology>
    </subcellularLocation>
</comment>
<comment type="similarity">
    <text evidence="1">Belongs to the UPF0756 family.</text>
</comment>
<keyword id="KW-1003">Cell membrane</keyword>
<keyword id="KW-0472">Membrane</keyword>
<keyword id="KW-0812">Transmembrane</keyword>
<keyword id="KW-1133">Transmembrane helix</keyword>
<gene>
    <name type="ordered locus">LMHCC_1001</name>
</gene>
<evidence type="ECO:0000255" key="1">
    <source>
        <dbReference type="HAMAP-Rule" id="MF_01874"/>
    </source>
</evidence>